<protein>
    <recommendedName>
        <fullName>Peroxidase 30</fullName>
        <shortName>Atperox P30</shortName>
        <ecNumber>1.11.1.7</ecNumber>
    </recommendedName>
    <alternativeName>
        <fullName>ATP7a</fullName>
    </alternativeName>
    <alternativeName>
        <fullName>PRXR9</fullName>
    </alternativeName>
</protein>
<evidence type="ECO:0000255" key="1"/>
<evidence type="ECO:0000255" key="2">
    <source>
        <dbReference type="PROSITE-ProRule" id="PRU00297"/>
    </source>
</evidence>
<evidence type="ECO:0000256" key="3">
    <source>
        <dbReference type="SAM" id="MobiDB-lite"/>
    </source>
</evidence>
<evidence type="ECO:0000269" key="4">
    <source>
    </source>
</evidence>
<evidence type="ECO:0000269" key="5">
    <source ref="9"/>
</evidence>
<evidence type="ECO:0000305" key="6"/>
<comment type="function">
    <text>Removal of H(2)O(2), oxidation of toxic reductants, biosynthesis and degradation of lignin, suberization, auxin catabolism, response to environmental stresses such as wounding, pathogen attack and oxidative stress. These functions might be dependent on each isozyme/isoform in each plant tissue.</text>
</comment>
<comment type="catalytic activity">
    <reaction>
        <text>2 a phenolic donor + H2O2 = 2 a phenolic radical donor + 2 H2O</text>
        <dbReference type="Rhea" id="RHEA:56136"/>
        <dbReference type="ChEBI" id="CHEBI:15377"/>
        <dbReference type="ChEBI" id="CHEBI:16240"/>
        <dbReference type="ChEBI" id="CHEBI:139520"/>
        <dbReference type="ChEBI" id="CHEBI:139521"/>
        <dbReference type="EC" id="1.11.1.7"/>
    </reaction>
</comment>
<comment type="cofactor">
    <cofactor evidence="2">
        <name>heme b</name>
        <dbReference type="ChEBI" id="CHEBI:60344"/>
    </cofactor>
    <text evidence="2">Binds 1 heme b (iron(II)-protoporphyrin IX) group per subunit.</text>
</comment>
<comment type="cofactor">
    <cofactor evidence="2">
        <name>Ca(2+)</name>
        <dbReference type="ChEBI" id="CHEBI:29108"/>
    </cofactor>
    <text evidence="2">Binds 2 calcium ions per subunit.</text>
</comment>
<comment type="subcellular location">
    <subcellularLocation>
        <location evidence="2">Secreted</location>
    </subcellularLocation>
</comment>
<comment type="tissue specificity">
    <text evidence="4 5">Mainly expressed in roots.</text>
</comment>
<comment type="induction">
    <text>By high salinity stress.</text>
</comment>
<comment type="miscellaneous">
    <text>There are 73 peroxidase genes in A.thaliana.</text>
</comment>
<comment type="similarity">
    <text evidence="2">Belongs to the peroxidase family. Classical plant (class III) peroxidase subfamily.</text>
</comment>
<comment type="sequence caution" evidence="6">
    <conflict type="erroneous initiation">
        <sequence resource="EMBL-CDS" id="AAM61382"/>
    </conflict>
</comment>
<comment type="sequence caution" evidence="6">
    <conflict type="erroneous initiation">
        <sequence resource="EMBL-CDS" id="CAA67360"/>
    </conflict>
</comment>
<proteinExistence type="evidence at protein level"/>
<accession>Q9LSY7</accession>
<accession>Q43737</accession>
<accession>Q96521</accession>
<sequence length="329" mass="35788">MKTMTQLNIAVVVVVTVLIGMLRSSEAQLQMNFYAKSCPNAEKIISDHIQNHIHNGPSLAAPLIRMHFHDCFVRGCDGSVLINSTSGNAERDAPPNLTLRGFGFVERIKALLEKVCPKTVSCADIIALTARDAVVATGGPSWSVPTGRRDGRISNKTEATNNIPPPTSNFTTLQRLFKNQGLNLKDLVLLSGAHTIGVSHCSSMNTRLYNFSTTVKQDPSLDSQYAANLKANKCKSLNDNSTILEMDPGSSRSFDLSYYRLVLKRRGLFQSDSALTTNSATLKVINDLVNGSEKKFFKAFAKSMEKMGRVKVKTGSAGVIRTRCSVAGS</sequence>
<organism>
    <name type="scientific">Arabidopsis thaliana</name>
    <name type="common">Mouse-ear cress</name>
    <dbReference type="NCBI Taxonomy" id="3702"/>
    <lineage>
        <taxon>Eukaryota</taxon>
        <taxon>Viridiplantae</taxon>
        <taxon>Streptophyta</taxon>
        <taxon>Embryophyta</taxon>
        <taxon>Tracheophyta</taxon>
        <taxon>Spermatophyta</taxon>
        <taxon>Magnoliopsida</taxon>
        <taxon>eudicotyledons</taxon>
        <taxon>Gunneridae</taxon>
        <taxon>Pentapetalae</taxon>
        <taxon>rosids</taxon>
        <taxon>malvids</taxon>
        <taxon>Brassicales</taxon>
        <taxon>Brassicaceae</taxon>
        <taxon>Camelineae</taxon>
        <taxon>Arabidopsis</taxon>
    </lineage>
</organism>
<reference key="1">
    <citation type="online journal article" date="1996" name="Plant Gene Register">
        <title>Eleven cDNA clones from Arabidopsis thaliana encoding isoperoxidases.</title>
        <authorList>
            <person name="Capelli N."/>
            <person name="Tognolli M."/>
            <person name="Flach J."/>
            <person name="Overney S."/>
            <person name="Penel C."/>
            <person name="Greppin H."/>
            <person name="Simon P."/>
        </authorList>
        <locator>PGR96-066</locator>
    </citation>
    <scope>NUCLEOTIDE SEQUENCE [MRNA]</scope>
    <source>
        <strain>cv. Columbia</strain>
    </source>
</reference>
<reference key="2">
    <citation type="submission" date="1996-06" db="EMBL/GenBank/DDBJ databases">
        <title>From expressed sequence tags to structure, function, evolution and expression of 28 ER-targeted Arabidopsis peroxidases.</title>
        <authorList>
            <person name="Welinder K.G."/>
            <person name="Jespersen H.M."/>
            <person name="Kjaersgaard I.V.H."/>
            <person name="Justesen A.F."/>
            <person name="Oestergaard L."/>
            <person name="Abelskov A.K."/>
            <person name="Jensen R.B."/>
            <person name="Hansen L.N."/>
            <person name="Rasmussen S.K."/>
        </authorList>
    </citation>
    <scope>NUCLEOTIDE SEQUENCE [MRNA]</scope>
    <source>
        <strain>cv. Columbia</strain>
    </source>
</reference>
<reference key="3">
    <citation type="journal article" date="2000" name="DNA Res.">
        <title>Structural analysis of Arabidopsis thaliana chromosome 3. I. Sequence features of the regions of 4,504,864 bp covered by sixty P1 and TAC clones.</title>
        <authorList>
            <person name="Sato S."/>
            <person name="Nakamura Y."/>
            <person name="Kaneko T."/>
            <person name="Katoh T."/>
            <person name="Asamizu E."/>
            <person name="Tabata S."/>
        </authorList>
    </citation>
    <scope>NUCLEOTIDE SEQUENCE [LARGE SCALE GENOMIC DNA]</scope>
    <source>
        <strain>cv. Columbia</strain>
    </source>
</reference>
<reference key="4">
    <citation type="journal article" date="2017" name="Plant J.">
        <title>Araport11: a complete reannotation of the Arabidopsis thaliana reference genome.</title>
        <authorList>
            <person name="Cheng C.Y."/>
            <person name="Krishnakumar V."/>
            <person name="Chan A.P."/>
            <person name="Thibaud-Nissen F."/>
            <person name="Schobel S."/>
            <person name="Town C.D."/>
        </authorList>
    </citation>
    <scope>GENOME REANNOTATION</scope>
    <source>
        <strain>cv. Columbia</strain>
    </source>
</reference>
<reference key="5">
    <citation type="journal article" date="2003" name="Science">
        <title>Empirical analysis of transcriptional activity in the Arabidopsis genome.</title>
        <authorList>
            <person name="Yamada K."/>
            <person name="Lim J."/>
            <person name="Dale J.M."/>
            <person name="Chen H."/>
            <person name="Shinn P."/>
            <person name="Palm C.J."/>
            <person name="Southwick A.M."/>
            <person name="Wu H.C."/>
            <person name="Kim C.J."/>
            <person name="Nguyen M."/>
            <person name="Pham P.K."/>
            <person name="Cheuk R.F."/>
            <person name="Karlin-Newmann G."/>
            <person name="Liu S.X."/>
            <person name="Lam B."/>
            <person name="Sakano H."/>
            <person name="Wu T."/>
            <person name="Yu G."/>
            <person name="Miranda M."/>
            <person name="Quach H.L."/>
            <person name="Tripp M."/>
            <person name="Chang C.H."/>
            <person name="Lee J.M."/>
            <person name="Toriumi M.J."/>
            <person name="Chan M.M."/>
            <person name="Tang C.C."/>
            <person name="Onodera C.S."/>
            <person name="Deng J.M."/>
            <person name="Akiyama K."/>
            <person name="Ansari Y."/>
            <person name="Arakawa T."/>
            <person name="Banh J."/>
            <person name="Banno F."/>
            <person name="Bowser L."/>
            <person name="Brooks S.Y."/>
            <person name="Carninci P."/>
            <person name="Chao Q."/>
            <person name="Choy N."/>
            <person name="Enju A."/>
            <person name="Goldsmith A.D."/>
            <person name="Gurjal M."/>
            <person name="Hansen N.F."/>
            <person name="Hayashizaki Y."/>
            <person name="Johnson-Hopson C."/>
            <person name="Hsuan V.W."/>
            <person name="Iida K."/>
            <person name="Karnes M."/>
            <person name="Khan S."/>
            <person name="Koesema E."/>
            <person name="Ishida J."/>
            <person name="Jiang P.X."/>
            <person name="Jones T."/>
            <person name="Kawai J."/>
            <person name="Kamiya A."/>
            <person name="Meyers C."/>
            <person name="Nakajima M."/>
            <person name="Narusaka M."/>
            <person name="Seki M."/>
            <person name="Sakurai T."/>
            <person name="Satou M."/>
            <person name="Tamse R."/>
            <person name="Vaysberg M."/>
            <person name="Wallender E.K."/>
            <person name="Wong C."/>
            <person name="Yamamura Y."/>
            <person name="Yuan S."/>
            <person name="Shinozaki K."/>
            <person name="Davis R.W."/>
            <person name="Theologis A."/>
            <person name="Ecker J.R."/>
        </authorList>
    </citation>
    <scope>NUCLEOTIDE SEQUENCE [LARGE SCALE MRNA]</scope>
    <source>
        <strain>cv. Columbia</strain>
    </source>
</reference>
<reference key="6">
    <citation type="submission" date="2002-03" db="EMBL/GenBank/DDBJ databases">
        <title>Full-length cDNA from Arabidopsis thaliana.</title>
        <authorList>
            <person name="Brover V.V."/>
            <person name="Troukhan M.E."/>
            <person name="Alexandrov N.A."/>
            <person name="Lu Y.-P."/>
            <person name="Flavell R.B."/>
            <person name="Feldmann K.A."/>
        </authorList>
    </citation>
    <scope>NUCLEOTIDE SEQUENCE [LARGE SCALE MRNA]</scope>
</reference>
<reference key="7">
    <citation type="journal article" date="1998" name="FEBS Lett.">
        <title>Computational analyses and annotations of the Arabidopsis peroxidase gene family.</title>
        <authorList>
            <person name="Oestergaard L."/>
            <person name="Pedersen A.G."/>
            <person name="Jespersen H.M."/>
            <person name="Brunak S."/>
            <person name="Welinder K.G."/>
        </authorList>
    </citation>
    <scope>CHARACTERIZATION</scope>
    <source>
        <strain>cv. Columbia</strain>
    </source>
</reference>
<reference key="8">
    <citation type="journal article" date="1998" name="Plant J.">
        <title>Towards Arabidopsis genome analysis: monitoring expression profiles of 1400 genes using cDNA microarrays.</title>
        <authorList>
            <person name="Ruan Y."/>
            <person name="Gilmore J."/>
            <person name="Conner T."/>
        </authorList>
    </citation>
    <scope>TISSUE SPECIFICITY</scope>
    <source>
        <strain>cv. Columbia</strain>
    </source>
</reference>
<reference key="9">
    <citation type="journal article" date="2001" name="Plant Physiol. Biochem.">
        <title>Toward elucidating the global gene expression patterns of developing Arabidopsis: parallel analysis of 8300 genes by a high-density oligonucleotide probe array.</title>
        <authorList>
            <person name="Zhu T."/>
            <person name="Budworth P."/>
            <person name="Han B."/>
            <person name="Brown D."/>
            <person name="Chang H.-S."/>
            <person name="Zou G."/>
            <person name="Wang X."/>
        </authorList>
    </citation>
    <scope>TISSUE SPECIFICITY</scope>
    <source>
        <strain>cv. Columbia</strain>
    </source>
</reference>
<reference key="10">
    <citation type="journal article" date="2002" name="Gene">
        <title>Analysis and expression of the class III peroxidase large gene family in Arabidopsis thaliana.</title>
        <authorList>
            <person name="Tognolli M."/>
            <person name="Penel C."/>
            <person name="Greppin H."/>
            <person name="Simon P."/>
        </authorList>
    </citation>
    <scope>GENE FAMILY ORGANIZATION</scope>
    <scope>NOMENCLATURE</scope>
    <source>
        <strain>cv. Columbia</strain>
    </source>
</reference>
<reference key="11">
    <citation type="journal article" date="2007" name="Mol. Cell. Proteomics">
        <title>Multidimensional protein identification technology (MudPIT) analysis of ubiquitinated proteins in plants.</title>
        <authorList>
            <person name="Maor R."/>
            <person name="Jones A."/>
            <person name="Nuehse T.S."/>
            <person name="Studholme D.J."/>
            <person name="Peck S.C."/>
            <person name="Shirasu K."/>
        </authorList>
    </citation>
    <scope>IDENTIFICATION BY MASS SPECTROMETRY [LARGE SCALE ANALYSIS]</scope>
    <source>
        <strain>cv. Landsberg erecta</strain>
    </source>
</reference>
<feature type="signal peptide" evidence="1">
    <location>
        <begin position="1"/>
        <end position="27"/>
    </location>
</feature>
<feature type="chain" id="PRO_0000023696" description="Peroxidase 30">
    <location>
        <begin position="28"/>
        <end position="329"/>
    </location>
</feature>
<feature type="region of interest" description="Disordered" evidence="3">
    <location>
        <begin position="141"/>
        <end position="165"/>
    </location>
</feature>
<feature type="compositionally biased region" description="Polar residues" evidence="3">
    <location>
        <begin position="156"/>
        <end position="165"/>
    </location>
</feature>
<feature type="active site" description="Proton acceptor">
    <location>
        <position position="69"/>
    </location>
</feature>
<feature type="binding site" evidence="2">
    <location>
        <position position="70"/>
    </location>
    <ligand>
        <name>Ca(2+)</name>
        <dbReference type="ChEBI" id="CHEBI:29108"/>
        <label>1</label>
    </ligand>
</feature>
<feature type="binding site" evidence="2">
    <location>
        <position position="73"/>
    </location>
    <ligand>
        <name>Ca(2+)</name>
        <dbReference type="ChEBI" id="CHEBI:29108"/>
        <label>1</label>
    </ligand>
</feature>
<feature type="binding site" evidence="2">
    <location>
        <position position="75"/>
    </location>
    <ligand>
        <name>Ca(2+)</name>
        <dbReference type="ChEBI" id="CHEBI:29108"/>
        <label>1</label>
    </ligand>
</feature>
<feature type="binding site" evidence="2">
    <location>
        <position position="77"/>
    </location>
    <ligand>
        <name>Ca(2+)</name>
        <dbReference type="ChEBI" id="CHEBI:29108"/>
        <label>1</label>
    </ligand>
</feature>
<feature type="binding site" evidence="2">
    <location>
        <position position="79"/>
    </location>
    <ligand>
        <name>Ca(2+)</name>
        <dbReference type="ChEBI" id="CHEBI:29108"/>
        <label>1</label>
    </ligand>
</feature>
<feature type="binding site" evidence="2">
    <location>
        <position position="164"/>
    </location>
    <ligand>
        <name>substrate</name>
    </ligand>
</feature>
<feature type="binding site" description="axial binding residue" evidence="2">
    <location>
        <position position="194"/>
    </location>
    <ligand>
        <name>heme b</name>
        <dbReference type="ChEBI" id="CHEBI:60344"/>
    </ligand>
    <ligandPart>
        <name>Fe</name>
        <dbReference type="ChEBI" id="CHEBI:18248"/>
    </ligandPart>
</feature>
<feature type="binding site" evidence="2">
    <location>
        <position position="195"/>
    </location>
    <ligand>
        <name>Ca(2+)</name>
        <dbReference type="ChEBI" id="CHEBI:29108"/>
        <label>2</label>
    </ligand>
</feature>
<feature type="binding site" evidence="2">
    <location>
        <position position="247"/>
    </location>
    <ligand>
        <name>Ca(2+)</name>
        <dbReference type="ChEBI" id="CHEBI:29108"/>
        <label>2</label>
    </ligand>
</feature>
<feature type="binding site" evidence="2">
    <location>
        <position position="250"/>
    </location>
    <ligand>
        <name>Ca(2+)</name>
        <dbReference type="ChEBI" id="CHEBI:29108"/>
        <label>2</label>
    </ligand>
</feature>
<feature type="binding site" evidence="2">
    <location>
        <position position="255"/>
    </location>
    <ligand>
        <name>Ca(2+)</name>
        <dbReference type="ChEBI" id="CHEBI:29108"/>
        <label>2</label>
    </ligand>
</feature>
<feature type="site" description="Transition state stabilizer" evidence="2">
    <location>
        <position position="65"/>
    </location>
</feature>
<feature type="glycosylation site" description="N-linked (GlcNAc...) asparagine" evidence="1">
    <location>
        <position position="83"/>
    </location>
</feature>
<feature type="glycosylation site" description="N-linked (GlcNAc...) asparagine" evidence="1">
    <location>
        <position position="155"/>
    </location>
</feature>
<feature type="glycosylation site" description="N-linked (GlcNAc...) asparagine" evidence="1">
    <location>
        <position position="169"/>
    </location>
</feature>
<feature type="glycosylation site" description="N-linked (GlcNAc...) asparagine" evidence="1">
    <location>
        <position position="210"/>
    </location>
</feature>
<feature type="glycosylation site" description="N-linked (GlcNAc...) asparagine" evidence="1">
    <location>
        <position position="240"/>
    </location>
</feature>
<feature type="glycosylation site" description="N-linked (GlcNAc...) asparagine" evidence="1">
    <location>
        <position position="290"/>
    </location>
</feature>
<feature type="disulfide bond" evidence="2">
    <location>
        <begin position="38"/>
        <end position="116"/>
    </location>
</feature>
<feature type="disulfide bond" evidence="2">
    <location>
        <begin position="71"/>
        <end position="76"/>
    </location>
</feature>
<feature type="disulfide bond" evidence="2">
    <location>
        <begin position="122"/>
        <end position="324"/>
    </location>
</feature>
<feature type="disulfide bond" evidence="2">
    <location>
        <begin position="201"/>
        <end position="234"/>
    </location>
</feature>
<feature type="sequence conflict" description="In Ref. 6; AAM61382." evidence="6" ref="6">
    <original>A</original>
    <variation>T</variation>
    <location>
        <position position="133"/>
    </location>
</feature>
<feature type="sequence conflict" description="In Ref. 6; AAM61382." evidence="6" ref="6">
    <original>KT</original>
    <variation>LK</variation>
    <location>
        <begin position="156"/>
        <end position="157"/>
    </location>
</feature>
<feature type="sequence conflict" description="In Ref. 6; AAM61382." evidence="6" ref="6">
    <original>Q</original>
    <variation>R</variation>
    <location>
        <position position="174"/>
    </location>
</feature>
<feature type="sequence conflict" description="In Ref. 1 and 2." evidence="6" ref="1 2">
    <original>S</original>
    <variation>N</variation>
    <location>
        <position position="329"/>
    </location>
</feature>
<dbReference type="EC" id="1.11.1.7"/>
<dbReference type="EMBL" id="X98321">
    <property type="protein sequence ID" value="CAA66965.1"/>
    <property type="molecule type" value="mRNA"/>
</dbReference>
<dbReference type="EMBL" id="X98854">
    <property type="protein sequence ID" value="CAA67360.1"/>
    <property type="status" value="ALT_INIT"/>
    <property type="molecule type" value="mRNA"/>
</dbReference>
<dbReference type="EMBL" id="AB025634">
    <property type="protein sequence ID" value="BAB02839.1"/>
    <property type="molecule type" value="Genomic_DNA"/>
</dbReference>
<dbReference type="EMBL" id="CP002686">
    <property type="protein sequence ID" value="AEE76550.1"/>
    <property type="molecule type" value="Genomic_DNA"/>
</dbReference>
<dbReference type="EMBL" id="AY072326">
    <property type="protein sequence ID" value="AAL61933.1"/>
    <property type="molecule type" value="mRNA"/>
</dbReference>
<dbReference type="EMBL" id="AY114567">
    <property type="protein sequence ID" value="AAM47886.1"/>
    <property type="molecule type" value="mRNA"/>
</dbReference>
<dbReference type="EMBL" id="AY084816">
    <property type="protein sequence ID" value="AAM61382.1"/>
    <property type="status" value="ALT_INIT"/>
    <property type="molecule type" value="mRNA"/>
</dbReference>
<dbReference type="RefSeq" id="NP_188814.1">
    <property type="nucleotide sequence ID" value="NM_113072.2"/>
</dbReference>
<dbReference type="SMR" id="Q9LSY7"/>
<dbReference type="FunCoup" id="Q9LSY7">
    <property type="interactions" value="139"/>
</dbReference>
<dbReference type="STRING" id="3702.Q9LSY7"/>
<dbReference type="PeroxiBase" id="123">
    <property type="entry name" value="AtPrx30"/>
</dbReference>
<dbReference type="GlyCosmos" id="Q9LSY7">
    <property type="glycosylation" value="6 sites, No reported glycans"/>
</dbReference>
<dbReference type="GlyGen" id="Q9LSY7">
    <property type="glycosylation" value="6 sites"/>
</dbReference>
<dbReference type="PaxDb" id="3702-AT3G21770.1"/>
<dbReference type="ProteomicsDB" id="236410"/>
<dbReference type="EnsemblPlants" id="AT3G21770.1">
    <property type="protein sequence ID" value="AT3G21770.1"/>
    <property type="gene ID" value="AT3G21770"/>
</dbReference>
<dbReference type="GeneID" id="821731"/>
<dbReference type="Gramene" id="AT3G21770.1">
    <property type="protein sequence ID" value="AT3G21770.1"/>
    <property type="gene ID" value="AT3G21770"/>
</dbReference>
<dbReference type="KEGG" id="ath:AT3G21770"/>
<dbReference type="Araport" id="AT3G21770"/>
<dbReference type="TAIR" id="AT3G21770"/>
<dbReference type="eggNOG" id="ENOG502QRTP">
    <property type="taxonomic scope" value="Eukaryota"/>
</dbReference>
<dbReference type="HOGENOM" id="CLU_010543_0_3_1"/>
<dbReference type="InParanoid" id="Q9LSY7"/>
<dbReference type="OMA" id="DHIQNHI"/>
<dbReference type="PhylomeDB" id="Q9LSY7"/>
<dbReference type="BioCyc" id="ARA:AT3G21770-MONOMER"/>
<dbReference type="PRO" id="PR:Q9LSY7"/>
<dbReference type="Proteomes" id="UP000006548">
    <property type="component" value="Chromosome 3"/>
</dbReference>
<dbReference type="ExpressionAtlas" id="Q9LSY7">
    <property type="expression patterns" value="baseline and differential"/>
</dbReference>
<dbReference type="GO" id="GO:0005737">
    <property type="term" value="C:cytoplasm"/>
    <property type="evidence" value="ECO:0007005"/>
    <property type="project" value="TAIR"/>
</dbReference>
<dbReference type="GO" id="GO:0005576">
    <property type="term" value="C:extracellular region"/>
    <property type="evidence" value="ECO:0007669"/>
    <property type="project" value="UniProtKB-SubCell"/>
</dbReference>
<dbReference type="GO" id="GO:0005634">
    <property type="term" value="C:nucleus"/>
    <property type="evidence" value="ECO:0007005"/>
    <property type="project" value="TAIR"/>
</dbReference>
<dbReference type="GO" id="GO:0009505">
    <property type="term" value="C:plant-type cell wall"/>
    <property type="evidence" value="ECO:0007005"/>
    <property type="project" value="TAIR"/>
</dbReference>
<dbReference type="GO" id="GO:0009506">
    <property type="term" value="C:plasmodesma"/>
    <property type="evidence" value="ECO:0007005"/>
    <property type="project" value="TAIR"/>
</dbReference>
<dbReference type="GO" id="GO:0020037">
    <property type="term" value="F:heme binding"/>
    <property type="evidence" value="ECO:0007669"/>
    <property type="project" value="InterPro"/>
</dbReference>
<dbReference type="GO" id="GO:0140825">
    <property type="term" value="F:lactoperoxidase activity"/>
    <property type="evidence" value="ECO:0007669"/>
    <property type="project" value="UniProtKB-EC"/>
</dbReference>
<dbReference type="GO" id="GO:0046872">
    <property type="term" value="F:metal ion binding"/>
    <property type="evidence" value="ECO:0007669"/>
    <property type="project" value="UniProtKB-KW"/>
</dbReference>
<dbReference type="GO" id="GO:0042744">
    <property type="term" value="P:hydrogen peroxide catabolic process"/>
    <property type="evidence" value="ECO:0007669"/>
    <property type="project" value="UniProtKB-KW"/>
</dbReference>
<dbReference type="GO" id="GO:0006979">
    <property type="term" value="P:response to oxidative stress"/>
    <property type="evidence" value="ECO:0007669"/>
    <property type="project" value="InterPro"/>
</dbReference>
<dbReference type="CDD" id="cd00693">
    <property type="entry name" value="secretory_peroxidase"/>
    <property type="match status" value="1"/>
</dbReference>
<dbReference type="FunFam" id="1.10.420.10:FF:000008">
    <property type="entry name" value="Peroxidase"/>
    <property type="match status" value="1"/>
</dbReference>
<dbReference type="FunFam" id="1.10.520.10:FF:000001">
    <property type="entry name" value="Peroxidase"/>
    <property type="match status" value="1"/>
</dbReference>
<dbReference type="Gene3D" id="1.10.520.10">
    <property type="match status" value="1"/>
</dbReference>
<dbReference type="Gene3D" id="1.10.420.10">
    <property type="entry name" value="Peroxidase, domain 2"/>
    <property type="match status" value="1"/>
</dbReference>
<dbReference type="InterPro" id="IPR002016">
    <property type="entry name" value="Haem_peroxidase"/>
</dbReference>
<dbReference type="InterPro" id="IPR010255">
    <property type="entry name" value="Haem_peroxidase_sf"/>
</dbReference>
<dbReference type="InterPro" id="IPR000823">
    <property type="entry name" value="Peroxidase_pln"/>
</dbReference>
<dbReference type="InterPro" id="IPR019794">
    <property type="entry name" value="Peroxidases_AS"/>
</dbReference>
<dbReference type="InterPro" id="IPR019793">
    <property type="entry name" value="Peroxidases_heam-ligand_BS"/>
</dbReference>
<dbReference type="InterPro" id="IPR033905">
    <property type="entry name" value="Secretory_peroxidase"/>
</dbReference>
<dbReference type="PANTHER" id="PTHR31235">
    <property type="entry name" value="PEROXIDASE 25-RELATED"/>
    <property type="match status" value="1"/>
</dbReference>
<dbReference type="Pfam" id="PF00141">
    <property type="entry name" value="peroxidase"/>
    <property type="match status" value="1"/>
</dbReference>
<dbReference type="PRINTS" id="PR00458">
    <property type="entry name" value="PEROXIDASE"/>
</dbReference>
<dbReference type="PRINTS" id="PR00461">
    <property type="entry name" value="PLPEROXIDASE"/>
</dbReference>
<dbReference type="SUPFAM" id="SSF48113">
    <property type="entry name" value="Heme-dependent peroxidases"/>
    <property type="match status" value="1"/>
</dbReference>
<dbReference type="PROSITE" id="PS00435">
    <property type="entry name" value="PEROXIDASE_1"/>
    <property type="match status" value="1"/>
</dbReference>
<dbReference type="PROSITE" id="PS00436">
    <property type="entry name" value="PEROXIDASE_2"/>
    <property type="match status" value="1"/>
</dbReference>
<dbReference type="PROSITE" id="PS50873">
    <property type="entry name" value="PEROXIDASE_4"/>
    <property type="match status" value="1"/>
</dbReference>
<keyword id="KW-0106">Calcium</keyword>
<keyword id="KW-1015">Disulfide bond</keyword>
<keyword id="KW-0325">Glycoprotein</keyword>
<keyword id="KW-0349">Heme</keyword>
<keyword id="KW-0376">Hydrogen peroxide</keyword>
<keyword id="KW-0408">Iron</keyword>
<keyword id="KW-0479">Metal-binding</keyword>
<keyword id="KW-0560">Oxidoreductase</keyword>
<keyword id="KW-0575">Peroxidase</keyword>
<keyword id="KW-1185">Reference proteome</keyword>
<keyword id="KW-0964">Secreted</keyword>
<keyword id="KW-0732">Signal</keyword>
<gene>
    <name type="primary">PER30</name>
    <name type="synonym">P30</name>
    <name type="ordered locus">At3g21770</name>
    <name type="ORF">MSD21.10</name>
    <name type="ORF">MSD21.8</name>
</gene>
<name>PER30_ARATH</name>